<proteinExistence type="inferred from homology"/>
<protein>
    <recommendedName>
        <fullName>Subtilase-type protease inhibitor</fullName>
    </recommendedName>
</protein>
<organism>
    <name type="scientific">Streptomyces fradiae</name>
    <name type="common">Streptomyces roseoflavus</name>
    <dbReference type="NCBI Taxonomy" id="1906"/>
    <lineage>
        <taxon>Bacteria</taxon>
        <taxon>Bacillati</taxon>
        <taxon>Actinomycetota</taxon>
        <taxon>Actinomycetes</taxon>
        <taxon>Kitasatosporales</taxon>
        <taxon>Streptomycetaceae</taxon>
        <taxon>Streptomyces</taxon>
    </lineage>
</organism>
<evidence type="ECO:0000250" key="1"/>
<evidence type="ECO:0000255" key="2"/>
<evidence type="ECO:0000305" key="3"/>
<sequence length="142" mass="14712">MRNRAKTALVGTLVAATAALGPLGGTAHAGDSSLYAPSDLVLTIAHGEDAASVAPERAVTLTCEPQARGTHPSPQEACVLLGDAGGDVDAIAPPAEPQLCTYQYDPVVVTCXGVWQGRFVDQERTFGNECVMRAETGAVFDF</sequence>
<feature type="signal peptide" evidence="2">
    <location>
        <begin position="1"/>
        <end position="29"/>
    </location>
</feature>
<feature type="chain" id="PRO_0000033273" description="Subtilase-type protease inhibitor">
    <location>
        <begin position="30"/>
        <end position="142"/>
    </location>
</feature>
<feature type="site" description="Reactive bond" evidence="1">
    <location>
        <begin position="67"/>
        <end position="68"/>
    </location>
</feature>
<feature type="disulfide bond" evidence="1">
    <location>
        <begin position="63"/>
        <end position="78"/>
    </location>
</feature>
<feature type="disulfide bond" evidence="1">
    <location>
        <begin position="100"/>
        <end position="130"/>
    </location>
</feature>
<dbReference type="EMBL" id="U90533">
    <property type="protein sequence ID" value="AAD09245.2"/>
    <property type="status" value="ALT_FRAME"/>
    <property type="molecule type" value="Genomic_DNA"/>
</dbReference>
<dbReference type="STRING" id="1906.SFRA_31995"/>
<dbReference type="eggNOG" id="ENOG50333FU">
    <property type="taxonomic scope" value="Bacteria"/>
</dbReference>
<dbReference type="GO" id="GO:0005576">
    <property type="term" value="C:extracellular region"/>
    <property type="evidence" value="ECO:0007669"/>
    <property type="project" value="UniProtKB-SubCell"/>
</dbReference>
<dbReference type="GO" id="GO:0004867">
    <property type="term" value="F:serine-type endopeptidase inhibitor activity"/>
    <property type="evidence" value="ECO:0007669"/>
    <property type="project" value="UniProtKB-UniRule"/>
</dbReference>
<dbReference type="Gene3D" id="3.30.350.10">
    <property type="entry name" value="Subtilisin inhibitor-like"/>
    <property type="match status" value="1"/>
</dbReference>
<dbReference type="HAMAP" id="MF_00778">
    <property type="entry name" value="SSI"/>
    <property type="match status" value="1"/>
</dbReference>
<dbReference type="InterPro" id="IPR000691">
    <property type="entry name" value="Prot_inh_I16_SSI"/>
</dbReference>
<dbReference type="InterPro" id="IPR023549">
    <property type="entry name" value="Subtilisin_inhibitor"/>
</dbReference>
<dbReference type="InterPro" id="IPR036819">
    <property type="entry name" value="Subtilisin_inhibitor-like_sf"/>
</dbReference>
<dbReference type="Pfam" id="PF00720">
    <property type="entry name" value="SSI"/>
    <property type="match status" value="1"/>
</dbReference>
<dbReference type="PRINTS" id="PR00294">
    <property type="entry name" value="SSBTLNINHBTR"/>
</dbReference>
<dbReference type="SUPFAM" id="SSF55399">
    <property type="entry name" value="Subtilisin inhibitor"/>
    <property type="match status" value="1"/>
</dbReference>
<comment type="function">
    <text evidence="1">Strong inhibitor of bacterial serine proteases such as subtilisin.</text>
</comment>
<comment type="subunit">
    <text evidence="1">Homodimer.</text>
</comment>
<comment type="subcellular location">
    <subcellularLocation>
        <location evidence="1">Secreted</location>
    </subcellularLocation>
</comment>
<comment type="similarity">
    <text evidence="3">Belongs to the protease inhibitor I16 (SSI) family.</text>
</comment>
<comment type="sequence caution" evidence="3">
    <conflict type="frameshift">
        <sequence resource="EMBL-CDS" id="AAD09245"/>
    </conflict>
</comment>
<reference key="1">
    <citation type="submission" date="1999-03" db="EMBL/GenBank/DDBJ databases">
        <title>Molecular cloning of serine protease inhibitor Streptomyces fradiae SMF9.</title>
        <authorList>
            <person name="Lee K.J."/>
        </authorList>
    </citation>
    <scope>NUCLEOTIDE SEQUENCE [GENOMIC DNA]</scope>
    <source>
        <strain>SMF9</strain>
    </source>
</reference>
<name>SSI_STRFR</name>
<keyword id="KW-1015">Disulfide bond</keyword>
<keyword id="KW-0646">Protease inhibitor</keyword>
<keyword id="KW-0964">Secreted</keyword>
<keyword id="KW-0722">Serine protease inhibitor</keyword>
<keyword id="KW-0732">Signal</keyword>
<accession>Q9ZA15</accession>